<evidence type="ECO:0000255" key="1">
    <source>
        <dbReference type="HAMAP-Rule" id="MF_01716"/>
    </source>
</evidence>
<proteinExistence type="inferred from homology"/>
<organism>
    <name type="scientific">Clostridium tetani (strain Massachusetts / E88)</name>
    <dbReference type="NCBI Taxonomy" id="212717"/>
    <lineage>
        <taxon>Bacteria</taxon>
        <taxon>Bacillati</taxon>
        <taxon>Bacillota</taxon>
        <taxon>Clostridia</taxon>
        <taxon>Eubacteriales</taxon>
        <taxon>Clostridiaceae</taxon>
        <taxon>Clostridium</taxon>
    </lineage>
</organism>
<comment type="function">
    <text evidence="1">Part of the ABC transporter complex RbsABC involved in ribose import. Responsible for energy coupling to the transport system.</text>
</comment>
<comment type="catalytic activity">
    <reaction evidence="1">
        <text>D-ribose(out) + ATP + H2O = D-ribose(in) + ADP + phosphate + H(+)</text>
        <dbReference type="Rhea" id="RHEA:29903"/>
        <dbReference type="ChEBI" id="CHEBI:15377"/>
        <dbReference type="ChEBI" id="CHEBI:15378"/>
        <dbReference type="ChEBI" id="CHEBI:30616"/>
        <dbReference type="ChEBI" id="CHEBI:43474"/>
        <dbReference type="ChEBI" id="CHEBI:47013"/>
        <dbReference type="ChEBI" id="CHEBI:456216"/>
        <dbReference type="EC" id="7.5.2.7"/>
    </reaction>
</comment>
<comment type="subunit">
    <text evidence="1">The complex is composed of an ATP-binding protein (RbsA), two transmembrane proteins (RbsC) and a solute-binding protein (RbsB).</text>
</comment>
<comment type="subcellular location">
    <subcellularLocation>
        <location evidence="1">Cell membrane</location>
        <topology evidence="1">Peripheral membrane protein</topology>
    </subcellularLocation>
</comment>
<comment type="similarity">
    <text evidence="1">Belongs to the ABC transporter superfamily. Ribose importer (TC 3.A.1.2.1) family.</text>
</comment>
<sequence length="505" mass="56614">MKKENLEEKPFLQMKGISKFFSGVQALDNVELKVYRGEVLALLGENGAGKSTLMKILSGVYTKDEGDIFIDEKKVDIKGIKEAEELGISIIHQELSLLSNLKIYENIFLGSEKYKGIFNKLDKDYMRSESEKLLSTIGFTADVDILAKDINIGEMQMIEIIKAISKKSKLIIMDEPTTALTEVETERLFKVINKLKSEGICIIYISHRLDEIFQICDRVNVLRDGKYVGEVKVKDTTKDDLITMMVGRKLEEQFPYKKVKKGDALLAVNNLSYKNKVKNISFEVRAGEILGLAGLMGSGRTELAKTIFGEYKKSSGDIYINDKKINITSPKEAIENGIAYLSEDRKKEGLILNMSVGNNISLCNLKKYENSIKKINKEKESKEIDDYIKKLSVKTPSANQIIKNLSGGNQQKAIIAKWIMISPNILIIDEPTRGIDVGAKKEIYEVLNEIKSLGKAIIMISSDMPEVLGISDRILVMSEGNLSGELSREEATQEKIMKYAVAFSN</sequence>
<name>RBSA_CLOTE</name>
<feature type="chain" id="PRO_0000261059" description="Ribose import ATP-binding protein RbsA">
    <location>
        <begin position="1"/>
        <end position="505"/>
    </location>
</feature>
<feature type="domain" description="ABC transporter 1" evidence="1">
    <location>
        <begin position="12"/>
        <end position="249"/>
    </location>
</feature>
<feature type="domain" description="ABC transporter 2" evidence="1">
    <location>
        <begin position="259"/>
        <end position="504"/>
    </location>
</feature>
<feature type="binding site" evidence="1">
    <location>
        <begin position="44"/>
        <end position="51"/>
    </location>
    <ligand>
        <name>ATP</name>
        <dbReference type="ChEBI" id="CHEBI:30616"/>
    </ligand>
</feature>
<accession>Q891M1</accession>
<gene>
    <name evidence="1" type="primary">rbsA</name>
    <name type="ordered locus">CTC_02350</name>
</gene>
<protein>
    <recommendedName>
        <fullName evidence="1">Ribose import ATP-binding protein RbsA</fullName>
        <ecNumber evidence="1">7.5.2.7</ecNumber>
    </recommendedName>
</protein>
<keyword id="KW-0067">ATP-binding</keyword>
<keyword id="KW-1003">Cell membrane</keyword>
<keyword id="KW-0472">Membrane</keyword>
<keyword id="KW-0547">Nucleotide-binding</keyword>
<keyword id="KW-1185">Reference proteome</keyword>
<keyword id="KW-0677">Repeat</keyword>
<keyword id="KW-0762">Sugar transport</keyword>
<keyword id="KW-1278">Translocase</keyword>
<keyword id="KW-0813">Transport</keyword>
<reference key="1">
    <citation type="journal article" date="2003" name="Proc. Natl. Acad. Sci. U.S.A.">
        <title>The genome sequence of Clostridium tetani, the causative agent of tetanus disease.</title>
        <authorList>
            <person name="Brueggemann H."/>
            <person name="Baeumer S."/>
            <person name="Fricke W.F."/>
            <person name="Wiezer A."/>
            <person name="Liesegang H."/>
            <person name="Decker I."/>
            <person name="Herzberg C."/>
            <person name="Martinez-Arias R."/>
            <person name="Merkl R."/>
            <person name="Henne A."/>
            <person name="Gottschalk G."/>
        </authorList>
    </citation>
    <scope>NUCLEOTIDE SEQUENCE [LARGE SCALE GENOMIC DNA]</scope>
    <source>
        <strain>Massachusetts / E88</strain>
    </source>
</reference>
<dbReference type="EC" id="7.5.2.7" evidence="1"/>
<dbReference type="EMBL" id="AE015927">
    <property type="protein sequence ID" value="AAO36824.1"/>
    <property type="molecule type" value="Genomic_DNA"/>
</dbReference>
<dbReference type="RefSeq" id="WP_011100485.1">
    <property type="nucleotide sequence ID" value="NC_004557.1"/>
</dbReference>
<dbReference type="SMR" id="Q891M1"/>
<dbReference type="STRING" id="212717.CTC_02350"/>
<dbReference type="GeneID" id="24253095"/>
<dbReference type="KEGG" id="ctc:CTC_02350"/>
<dbReference type="HOGENOM" id="CLU_000604_92_3_9"/>
<dbReference type="OrthoDB" id="9771863at2"/>
<dbReference type="Proteomes" id="UP000001412">
    <property type="component" value="Chromosome"/>
</dbReference>
<dbReference type="GO" id="GO:0005886">
    <property type="term" value="C:plasma membrane"/>
    <property type="evidence" value="ECO:0007669"/>
    <property type="project" value="UniProtKB-SubCell"/>
</dbReference>
<dbReference type="GO" id="GO:0015611">
    <property type="term" value="F:ABC-type D-ribose transporter activity"/>
    <property type="evidence" value="ECO:0007669"/>
    <property type="project" value="UniProtKB-EC"/>
</dbReference>
<dbReference type="GO" id="GO:0005524">
    <property type="term" value="F:ATP binding"/>
    <property type="evidence" value="ECO:0007669"/>
    <property type="project" value="UniProtKB-KW"/>
</dbReference>
<dbReference type="GO" id="GO:0016887">
    <property type="term" value="F:ATP hydrolysis activity"/>
    <property type="evidence" value="ECO:0007669"/>
    <property type="project" value="InterPro"/>
</dbReference>
<dbReference type="CDD" id="cd03216">
    <property type="entry name" value="ABC_Carb_Monos_I"/>
    <property type="match status" value="1"/>
</dbReference>
<dbReference type="CDD" id="cd03215">
    <property type="entry name" value="ABC_Carb_Monos_II"/>
    <property type="match status" value="1"/>
</dbReference>
<dbReference type="FunFam" id="3.40.50.300:FF:000126">
    <property type="entry name" value="Galactose/methyl galactoside import ATP-binding protein MglA"/>
    <property type="match status" value="1"/>
</dbReference>
<dbReference type="FunFam" id="3.40.50.300:FF:000127">
    <property type="entry name" value="Ribose import ATP-binding protein RbsA"/>
    <property type="match status" value="1"/>
</dbReference>
<dbReference type="Gene3D" id="3.40.50.300">
    <property type="entry name" value="P-loop containing nucleotide triphosphate hydrolases"/>
    <property type="match status" value="2"/>
</dbReference>
<dbReference type="InterPro" id="IPR003593">
    <property type="entry name" value="AAA+_ATPase"/>
</dbReference>
<dbReference type="InterPro" id="IPR050107">
    <property type="entry name" value="ABC_carbohydrate_import_ATPase"/>
</dbReference>
<dbReference type="InterPro" id="IPR003439">
    <property type="entry name" value="ABC_transporter-like_ATP-bd"/>
</dbReference>
<dbReference type="InterPro" id="IPR017871">
    <property type="entry name" value="ABC_transporter-like_CS"/>
</dbReference>
<dbReference type="InterPro" id="IPR027417">
    <property type="entry name" value="P-loop_NTPase"/>
</dbReference>
<dbReference type="PANTHER" id="PTHR43790">
    <property type="entry name" value="CARBOHYDRATE TRANSPORT ATP-BINDING PROTEIN MG119-RELATED"/>
    <property type="match status" value="1"/>
</dbReference>
<dbReference type="PANTHER" id="PTHR43790:SF3">
    <property type="entry name" value="D-ALLOSE IMPORT ATP-BINDING PROTEIN ALSA-RELATED"/>
    <property type="match status" value="1"/>
</dbReference>
<dbReference type="Pfam" id="PF00005">
    <property type="entry name" value="ABC_tran"/>
    <property type="match status" value="2"/>
</dbReference>
<dbReference type="SMART" id="SM00382">
    <property type="entry name" value="AAA"/>
    <property type="match status" value="2"/>
</dbReference>
<dbReference type="SUPFAM" id="SSF52540">
    <property type="entry name" value="P-loop containing nucleoside triphosphate hydrolases"/>
    <property type="match status" value="2"/>
</dbReference>
<dbReference type="PROSITE" id="PS00211">
    <property type="entry name" value="ABC_TRANSPORTER_1"/>
    <property type="match status" value="1"/>
</dbReference>
<dbReference type="PROSITE" id="PS50893">
    <property type="entry name" value="ABC_TRANSPORTER_2"/>
    <property type="match status" value="2"/>
</dbReference>
<dbReference type="PROSITE" id="PS51254">
    <property type="entry name" value="RBSA"/>
    <property type="match status" value="1"/>
</dbReference>